<proteinExistence type="inferred from homology"/>
<protein>
    <recommendedName>
        <fullName evidence="4">Phallacidin proprotein</fullName>
    </recommendedName>
    <component>
        <recommendedName>
            <fullName evidence="4">Phallacidin</fullName>
        </recommendedName>
    </component>
</protein>
<evidence type="ECO:0000250" key="1">
    <source>
        <dbReference type="UniProtKB" id="A0A067SLB9"/>
    </source>
</evidence>
<evidence type="ECO:0000250" key="2">
    <source>
        <dbReference type="UniProtKB" id="A8W7M4"/>
    </source>
</evidence>
<evidence type="ECO:0000250" key="3">
    <source>
        <dbReference type="UniProtKB" id="P85421"/>
    </source>
</evidence>
<evidence type="ECO:0000303" key="4">
    <source>
    </source>
</evidence>
<evidence type="ECO:0000305" key="5"/>
<evidence type="ECO:0000305" key="6">
    <source>
    </source>
</evidence>
<name>PHAT_AMAFU</name>
<comment type="function">
    <text evidence="6">Major toxin that belongs to the bicyclic heptapeptides called phallotoxins (PubMed:24613547). Although structurally related to amatoxins, phallotoxins have a different mode of action, which is the stabilization of F-actin (PubMed:24613547). Phallotoxins are poisonous when administered parenterally, but not orally because of poor absorption (PubMed:24613547).</text>
</comment>
<comment type="PTM">
    <text evidence="1">Processed by the macrocyclase-peptidase enzyme POPB to yield a toxic cyclic heptapeptide (By similarity). POPB first removes 10 residues from the N-terminus (By similarity). Conformational trapping of the remaining peptide forces the enzyme to release this intermediate rather than proceed to macrocyclization (By similarity). The enzyme rebinds the remaining peptide in a different conformation and catalyzes macrocyclization of the N-terminal 7 residues (By similarity).</text>
</comment>
<comment type="similarity">
    <text evidence="5">Belongs to the MSDIN fungal toxin family.</text>
</comment>
<dbReference type="EMBL" id="KF546296">
    <property type="protein sequence ID" value="AHX98320.1"/>
    <property type="molecule type" value="Genomic_DNA"/>
</dbReference>
<dbReference type="EMBL" id="KF546297">
    <property type="protein sequence ID" value="AHX98321.1"/>
    <property type="molecule type" value="Genomic_DNA"/>
</dbReference>
<dbReference type="GO" id="GO:0090729">
    <property type="term" value="F:toxin activity"/>
    <property type="evidence" value="ECO:0007669"/>
    <property type="project" value="UniProtKB-KW"/>
</dbReference>
<dbReference type="InterPro" id="IPR027582">
    <property type="entry name" value="Amanitin/phalloidin"/>
</dbReference>
<dbReference type="NCBIfam" id="TIGR04309">
    <property type="entry name" value="amanitin"/>
    <property type="match status" value="1"/>
</dbReference>
<sequence>PAWLVDCPCVGDDVNRLLARGEK</sequence>
<accession>A0A023UA23</accession>
<keyword id="KW-0883">Thioether bond</keyword>
<keyword id="KW-0800">Toxin</keyword>
<reference key="1">
    <citation type="journal article" date="2014" name="Toxicon">
        <title>The molecular diversity of toxin gene families in lethal Amanita mushrooms.</title>
        <authorList>
            <person name="Li P."/>
            <person name="Deng W."/>
            <person name="Li T."/>
        </authorList>
    </citation>
    <scope>NUCLEOTIDE SEQUENCE [GENOMIC DNA]</scope>
    <scope>FUNCTION</scope>
</reference>
<organism>
    <name type="scientific">Amanita fuliginea</name>
    <name type="common">East Asian brown death cap</name>
    <dbReference type="NCBI Taxonomy" id="67708"/>
    <lineage>
        <taxon>Eukaryota</taxon>
        <taxon>Fungi</taxon>
        <taxon>Dikarya</taxon>
        <taxon>Basidiomycota</taxon>
        <taxon>Agaricomycotina</taxon>
        <taxon>Agaricomycetes</taxon>
        <taxon>Agaricomycetidae</taxon>
        <taxon>Agaricales</taxon>
        <taxon>Pluteineae</taxon>
        <taxon>Amanitaceae</taxon>
        <taxon>Amanita</taxon>
    </lineage>
</organism>
<feature type="propeptide" id="PRO_0000443620" evidence="2">
    <location>
        <position position="1"/>
    </location>
</feature>
<feature type="peptide" id="PRO_0000443621" description="Phallacidin" evidence="2">
    <location>
        <begin position="2"/>
        <end position="8"/>
    </location>
</feature>
<feature type="propeptide" id="PRO_0000443622" evidence="2">
    <location>
        <begin position="9"/>
        <end position="23"/>
    </location>
</feature>
<feature type="cross-link" description="Cyclopeptide (Ala-Pro)" evidence="2">
    <location>
        <begin position="2"/>
        <end position="8"/>
    </location>
</feature>
<feature type="cross-link" description="2'-cysteinyl-6'-hydroxytryptophan sulfoxide (Trp-Cys)" evidence="3">
    <location>
        <begin position="3"/>
        <end position="7"/>
    </location>
</feature>
<feature type="non-terminal residue" evidence="5">
    <location>
        <position position="1"/>
    </location>
</feature>